<sequence>MSVISTLRDRATTTPSDEAFVFMDYDTKTGDQIDRMTWSQLYSRVTAVSAYLISYGRHADRRRTAAISAPQGLDYVAGFLGALCAGWTPVPLPEPLGSLRDKRTGLAVLDCAADVVLTTSQAETRVRATIATHGASVTTPVIALDTLDEPSGDNCDLDSQLSDWSSYLQYTSGSTANPRGVVLSMRNVTENVDQIIRNYFRHEGGAPRLPSSVVSWLPLYHDMGLMVGLFIPLFVGCPVILTSPEAFIRKPARWMQLLAKHQAPFSAAPNFAFDLAVAKTSEEDMAGLDLGHVNTIINGAEQVQPNTITKFLRRFRPYNLMPAAVKPSYGMAEAVVYLATTKAGSPPTSTEFDADSLARGHAELSTFETERATRLIRYHSDDKEPLLRIVDPDSNIELGPGRIGEIWIHGKNVSTGYHNADDALNRDKFQASIREASAGTPRSPWLRTGDLGFIVGDEFYIVGRMKDLIIQDGVNHYPDDIETTVKEFTGGRVAAFSVSDDGVEHLVIAAEVRTEHGPDKVTIMDFSTIKRLVVSALSKLHGLHVTDFLLVPPGALPKTTSGKISRAACAKQYGANKLQRVATFP</sequence>
<organism>
    <name type="scientific">Mycobacterium tuberculosis (strain CDC 1551 / Oshkosh)</name>
    <dbReference type="NCBI Taxonomy" id="83331"/>
    <lineage>
        <taxon>Bacteria</taxon>
        <taxon>Bacillati</taxon>
        <taxon>Actinomycetota</taxon>
        <taxon>Actinomycetes</taxon>
        <taxon>Mycobacteriales</taxon>
        <taxon>Mycobacteriaceae</taxon>
        <taxon>Mycobacterium</taxon>
        <taxon>Mycobacterium tuberculosis complex</taxon>
    </lineage>
</organism>
<comment type="function">
    <text evidence="1">Catalyzes the activation of long-chain fatty acids as acyl-adenylates (acyl-AMP), which are then transferred to a multifunctional polyketide synthase (PKS) for further chain extension.</text>
</comment>
<comment type="pathway">
    <text evidence="1">Lipid metabolism; fatty acid biosynthesis.</text>
</comment>
<comment type="similarity">
    <text evidence="2">Belongs to the ATP-dependent AMP-binding enzyme family.</text>
</comment>
<dbReference type="EC" id="6.2.1.-" evidence="1"/>
<dbReference type="EMBL" id="AE000516">
    <property type="protein sequence ID" value="AAK44641.1"/>
    <property type="molecule type" value="Genomic_DNA"/>
</dbReference>
<dbReference type="PIR" id="C70634">
    <property type="entry name" value="C70634"/>
</dbReference>
<dbReference type="RefSeq" id="WP_003900139.1">
    <property type="nucleotide sequence ID" value="NZ_KK341227.1"/>
</dbReference>
<dbReference type="SMR" id="P9WQ56"/>
<dbReference type="KEGG" id="mtc:MT0417"/>
<dbReference type="PATRIC" id="fig|83331.31.peg.447"/>
<dbReference type="HOGENOM" id="CLU_000022_23_7_11"/>
<dbReference type="UniPathway" id="UPA00094"/>
<dbReference type="Proteomes" id="UP000001020">
    <property type="component" value="Chromosome"/>
</dbReference>
<dbReference type="GO" id="GO:0005886">
    <property type="term" value="C:plasma membrane"/>
    <property type="evidence" value="ECO:0007669"/>
    <property type="project" value="TreeGrafter"/>
</dbReference>
<dbReference type="GO" id="GO:0070566">
    <property type="term" value="F:adenylyltransferase activity"/>
    <property type="evidence" value="ECO:0007669"/>
    <property type="project" value="TreeGrafter"/>
</dbReference>
<dbReference type="GO" id="GO:0005524">
    <property type="term" value="F:ATP binding"/>
    <property type="evidence" value="ECO:0007669"/>
    <property type="project" value="UniProtKB-KW"/>
</dbReference>
<dbReference type="GO" id="GO:0016874">
    <property type="term" value="F:ligase activity"/>
    <property type="evidence" value="ECO:0007669"/>
    <property type="project" value="UniProtKB-KW"/>
</dbReference>
<dbReference type="GO" id="GO:0071766">
    <property type="term" value="P:Actinobacterium-type cell wall biogenesis"/>
    <property type="evidence" value="ECO:0007669"/>
    <property type="project" value="UniProtKB-ARBA"/>
</dbReference>
<dbReference type="GO" id="GO:0006633">
    <property type="term" value="P:fatty acid biosynthetic process"/>
    <property type="evidence" value="ECO:0007669"/>
    <property type="project" value="UniProtKB-UniPathway"/>
</dbReference>
<dbReference type="CDD" id="cd05931">
    <property type="entry name" value="FAAL"/>
    <property type="match status" value="1"/>
</dbReference>
<dbReference type="FunFam" id="3.30.300.30:FF:000029">
    <property type="entry name" value="Fatty-acid-CoA ligase FadD31"/>
    <property type="match status" value="1"/>
</dbReference>
<dbReference type="FunFam" id="3.40.50.12780:FF:000013">
    <property type="entry name" value="Long-chain-fatty-acid--AMP ligase FadD32"/>
    <property type="match status" value="1"/>
</dbReference>
<dbReference type="Gene3D" id="3.30.300.30">
    <property type="match status" value="1"/>
</dbReference>
<dbReference type="Gene3D" id="3.40.50.12780">
    <property type="entry name" value="N-terminal domain of ligase-like"/>
    <property type="match status" value="1"/>
</dbReference>
<dbReference type="InterPro" id="IPR025110">
    <property type="entry name" value="AMP-bd_C"/>
</dbReference>
<dbReference type="InterPro" id="IPR045851">
    <property type="entry name" value="AMP-bd_C_sf"/>
</dbReference>
<dbReference type="InterPro" id="IPR000873">
    <property type="entry name" value="AMP-dep_synth/lig_dom"/>
</dbReference>
<dbReference type="InterPro" id="IPR042099">
    <property type="entry name" value="ANL_N_sf"/>
</dbReference>
<dbReference type="InterPro" id="IPR040097">
    <property type="entry name" value="FAAL/FAAC"/>
</dbReference>
<dbReference type="PANTHER" id="PTHR22754:SF32">
    <property type="entry name" value="DISCO-INTERACTING PROTEIN 2"/>
    <property type="match status" value="1"/>
</dbReference>
<dbReference type="PANTHER" id="PTHR22754">
    <property type="entry name" value="DISCO-INTERACTING PROTEIN 2 DIP2 -RELATED"/>
    <property type="match status" value="1"/>
</dbReference>
<dbReference type="Pfam" id="PF00501">
    <property type="entry name" value="AMP-binding"/>
    <property type="match status" value="1"/>
</dbReference>
<dbReference type="Pfam" id="PF23024">
    <property type="entry name" value="AMP-dom_DIP2-like"/>
    <property type="match status" value="1"/>
</dbReference>
<dbReference type="SUPFAM" id="SSF56801">
    <property type="entry name" value="Acetyl-CoA synthetase-like"/>
    <property type="match status" value="1"/>
</dbReference>
<name>FAA30_MYCTO</name>
<gene>
    <name type="primary">fadD30</name>
    <name type="ordered locus">MT0417</name>
</gene>
<proteinExistence type="inferred from homology"/>
<keyword id="KW-0067">ATP-binding</keyword>
<keyword id="KW-0276">Fatty acid metabolism</keyword>
<keyword id="KW-0436">Ligase</keyword>
<keyword id="KW-0443">Lipid metabolism</keyword>
<keyword id="KW-0547">Nucleotide-binding</keyword>
<keyword id="KW-1185">Reference proteome</keyword>
<reference key="1">
    <citation type="journal article" date="2002" name="J. Bacteriol.">
        <title>Whole-genome comparison of Mycobacterium tuberculosis clinical and laboratory strains.</title>
        <authorList>
            <person name="Fleischmann R.D."/>
            <person name="Alland D."/>
            <person name="Eisen J.A."/>
            <person name="Carpenter L."/>
            <person name="White O."/>
            <person name="Peterson J.D."/>
            <person name="DeBoy R.T."/>
            <person name="Dodson R.J."/>
            <person name="Gwinn M.L."/>
            <person name="Haft D.H."/>
            <person name="Hickey E.K."/>
            <person name="Kolonay J.F."/>
            <person name="Nelson W.C."/>
            <person name="Umayam L.A."/>
            <person name="Ermolaeva M.D."/>
            <person name="Salzberg S.L."/>
            <person name="Delcher A."/>
            <person name="Utterback T.R."/>
            <person name="Weidman J.F."/>
            <person name="Khouri H.M."/>
            <person name="Gill J."/>
            <person name="Mikula A."/>
            <person name="Bishai W."/>
            <person name="Jacobs W.R. Jr."/>
            <person name="Venter J.C."/>
            <person name="Fraser C.M."/>
        </authorList>
    </citation>
    <scope>NUCLEOTIDE SEQUENCE [LARGE SCALE GENOMIC DNA]</scope>
    <source>
        <strain>CDC 1551 / Oshkosh</strain>
    </source>
</reference>
<accession>P9WQ56</accession>
<accession>L0T3F7</accession>
<accession>P95213</accession>
<accession>Q7D9V7</accession>
<protein>
    <recommendedName>
        <fullName>Probable long-chain-fatty-acid--AMP ligase FadD30</fullName>
        <shortName>FAAL</shortName>
        <ecNumber evidence="1">6.2.1.-</ecNumber>
    </recommendedName>
    <alternativeName>
        <fullName>Acyl-AMP synthetase</fullName>
    </alternativeName>
</protein>
<feature type="chain" id="PRO_0000426834" description="Probable long-chain-fatty-acid--AMP ligase FadD30">
    <location>
        <begin position="1"/>
        <end position="585"/>
    </location>
</feature>
<evidence type="ECO:0000250" key="1">
    <source>
        <dbReference type="UniProtKB" id="P9WQ57"/>
    </source>
</evidence>
<evidence type="ECO:0000305" key="2"/>